<gene>
    <name evidence="1" type="primary">rimP</name>
    <name type="ordered locus">PsycPRwf_0155</name>
</gene>
<dbReference type="EMBL" id="CP000713">
    <property type="protein sequence ID" value="ABQ93114.1"/>
    <property type="molecule type" value="Genomic_DNA"/>
</dbReference>
<dbReference type="SMR" id="A5WBS3"/>
<dbReference type="STRING" id="349106.PsycPRwf_0155"/>
<dbReference type="KEGG" id="prw:PsycPRwf_0155"/>
<dbReference type="eggNOG" id="COG0779">
    <property type="taxonomic scope" value="Bacteria"/>
</dbReference>
<dbReference type="HOGENOM" id="CLU_070525_1_1_6"/>
<dbReference type="GO" id="GO:0005829">
    <property type="term" value="C:cytosol"/>
    <property type="evidence" value="ECO:0007669"/>
    <property type="project" value="TreeGrafter"/>
</dbReference>
<dbReference type="GO" id="GO:0000028">
    <property type="term" value="P:ribosomal small subunit assembly"/>
    <property type="evidence" value="ECO:0007669"/>
    <property type="project" value="TreeGrafter"/>
</dbReference>
<dbReference type="GO" id="GO:0006412">
    <property type="term" value="P:translation"/>
    <property type="evidence" value="ECO:0007669"/>
    <property type="project" value="TreeGrafter"/>
</dbReference>
<dbReference type="CDD" id="cd01734">
    <property type="entry name" value="YlxS_C"/>
    <property type="match status" value="1"/>
</dbReference>
<dbReference type="FunFam" id="3.30.300.70:FF:000001">
    <property type="entry name" value="Ribosome maturation factor RimP"/>
    <property type="match status" value="1"/>
</dbReference>
<dbReference type="Gene3D" id="2.30.30.180">
    <property type="entry name" value="Ribosome maturation factor RimP, C-terminal domain"/>
    <property type="match status" value="1"/>
</dbReference>
<dbReference type="Gene3D" id="3.30.300.70">
    <property type="entry name" value="RimP-like superfamily, N-terminal"/>
    <property type="match status" value="1"/>
</dbReference>
<dbReference type="HAMAP" id="MF_01077">
    <property type="entry name" value="RimP"/>
    <property type="match status" value="1"/>
</dbReference>
<dbReference type="InterPro" id="IPR003728">
    <property type="entry name" value="Ribosome_maturation_RimP"/>
</dbReference>
<dbReference type="InterPro" id="IPR028998">
    <property type="entry name" value="RimP_C"/>
</dbReference>
<dbReference type="InterPro" id="IPR036847">
    <property type="entry name" value="RimP_C_sf"/>
</dbReference>
<dbReference type="InterPro" id="IPR028989">
    <property type="entry name" value="RimP_N"/>
</dbReference>
<dbReference type="InterPro" id="IPR035956">
    <property type="entry name" value="RimP_N_sf"/>
</dbReference>
<dbReference type="NCBIfam" id="NF011224">
    <property type="entry name" value="PRK14631.1"/>
    <property type="match status" value="1"/>
</dbReference>
<dbReference type="PANTHER" id="PTHR33867">
    <property type="entry name" value="RIBOSOME MATURATION FACTOR RIMP"/>
    <property type="match status" value="1"/>
</dbReference>
<dbReference type="PANTHER" id="PTHR33867:SF1">
    <property type="entry name" value="RIBOSOME MATURATION FACTOR RIMP"/>
    <property type="match status" value="1"/>
</dbReference>
<dbReference type="Pfam" id="PF17384">
    <property type="entry name" value="DUF150_C"/>
    <property type="match status" value="1"/>
</dbReference>
<dbReference type="Pfam" id="PF02576">
    <property type="entry name" value="RimP_N"/>
    <property type="match status" value="1"/>
</dbReference>
<dbReference type="SUPFAM" id="SSF74942">
    <property type="entry name" value="YhbC-like, C-terminal domain"/>
    <property type="match status" value="1"/>
</dbReference>
<dbReference type="SUPFAM" id="SSF75420">
    <property type="entry name" value="YhbC-like, N-terminal domain"/>
    <property type="match status" value="1"/>
</dbReference>
<organism>
    <name type="scientific">Psychrobacter sp. (strain PRwf-1)</name>
    <dbReference type="NCBI Taxonomy" id="349106"/>
    <lineage>
        <taxon>Bacteria</taxon>
        <taxon>Pseudomonadati</taxon>
        <taxon>Pseudomonadota</taxon>
        <taxon>Gammaproteobacteria</taxon>
        <taxon>Moraxellales</taxon>
        <taxon>Moraxellaceae</taxon>
        <taxon>Psychrobacter</taxon>
    </lineage>
</organism>
<protein>
    <recommendedName>
        <fullName evidence="1">Ribosome maturation factor RimP</fullName>
    </recommendedName>
</protein>
<keyword id="KW-0963">Cytoplasm</keyword>
<keyword id="KW-0690">Ribosome biogenesis</keyword>
<accession>A5WBS3</accession>
<sequence length="166" mass="18143">MKLSNKVTQLTDIIAPAVAACDVALWGVEFLPQGGRSLLRIYIEALPEDKAADKQVTIENCAAVTHQVSGVLEVHDPIAGEYVLEVSSPGLDRPFFAPEQMTDYMGQTINLRLIQAVGSGSSKRRKVTGKLEQLDDKQLSVVTADGERYDIALDNIDKANLIYQDL</sequence>
<comment type="function">
    <text evidence="1">Required for maturation of 30S ribosomal subunits.</text>
</comment>
<comment type="subcellular location">
    <subcellularLocation>
        <location evidence="1">Cytoplasm</location>
    </subcellularLocation>
</comment>
<comment type="similarity">
    <text evidence="1">Belongs to the RimP family.</text>
</comment>
<evidence type="ECO:0000255" key="1">
    <source>
        <dbReference type="HAMAP-Rule" id="MF_01077"/>
    </source>
</evidence>
<proteinExistence type="inferred from homology"/>
<reference key="1">
    <citation type="submission" date="2007-05" db="EMBL/GenBank/DDBJ databases">
        <title>Complete sequence of chromosome of Psychrobacter sp. PRwf-1.</title>
        <authorList>
            <consortium name="US DOE Joint Genome Institute"/>
            <person name="Copeland A."/>
            <person name="Lucas S."/>
            <person name="Lapidus A."/>
            <person name="Barry K."/>
            <person name="Detter J.C."/>
            <person name="Glavina del Rio T."/>
            <person name="Hammon N."/>
            <person name="Israni S."/>
            <person name="Dalin E."/>
            <person name="Tice H."/>
            <person name="Pitluck S."/>
            <person name="Chain P."/>
            <person name="Malfatti S."/>
            <person name="Shin M."/>
            <person name="Vergez L."/>
            <person name="Schmutz J."/>
            <person name="Larimer F."/>
            <person name="Land M."/>
            <person name="Hauser L."/>
            <person name="Kyrpides N."/>
            <person name="Kim E."/>
            <person name="Tiedje J."/>
            <person name="Richardson P."/>
        </authorList>
    </citation>
    <scope>NUCLEOTIDE SEQUENCE [LARGE SCALE GENOMIC DNA]</scope>
    <source>
        <strain>PRwf-1</strain>
    </source>
</reference>
<feature type="chain" id="PRO_1000073021" description="Ribosome maturation factor RimP">
    <location>
        <begin position="1"/>
        <end position="166"/>
    </location>
</feature>
<name>RIMP_PSYWF</name>